<feature type="chain" id="PRO_0000341065" description="D-alanine--D-alanine ligase">
    <location>
        <begin position="1"/>
        <end position="367"/>
    </location>
</feature>
<feature type="domain" description="ATP-grasp" evidence="2">
    <location>
        <begin position="145"/>
        <end position="351"/>
    </location>
</feature>
<feature type="binding site" evidence="2">
    <location>
        <begin position="174"/>
        <end position="229"/>
    </location>
    <ligand>
        <name>ATP</name>
        <dbReference type="ChEBI" id="CHEBI:30616"/>
    </ligand>
</feature>
<feature type="binding site" evidence="2">
    <location>
        <position position="306"/>
    </location>
    <ligand>
        <name>Mg(2+)</name>
        <dbReference type="ChEBI" id="CHEBI:18420"/>
        <label>1</label>
    </ligand>
</feature>
<feature type="binding site" evidence="2">
    <location>
        <position position="318"/>
    </location>
    <ligand>
        <name>Mg(2+)</name>
        <dbReference type="ChEBI" id="CHEBI:18420"/>
        <label>1</label>
    </ligand>
</feature>
<feature type="binding site" evidence="2">
    <location>
        <position position="318"/>
    </location>
    <ligand>
        <name>Mg(2+)</name>
        <dbReference type="ChEBI" id="CHEBI:18420"/>
        <label>2</label>
    </ligand>
</feature>
<feature type="binding site" evidence="2">
    <location>
        <position position="320"/>
    </location>
    <ligand>
        <name>Mg(2+)</name>
        <dbReference type="ChEBI" id="CHEBI:18420"/>
        <label>2</label>
    </ligand>
</feature>
<accession>A4YRU4</accession>
<sequence>MTSERIRVAILFGGRSAEHDVSRASAANIFRSLDAGRYALTLIGITHDGRWVLADAVNDATSAALIVPADGPQIVLLPAGRGRALAIDGSAAAPRELAFDVIFPVLHGPNGEDGTVQGALELADVAYVGGRVLGSAAAMDKDVAKRLLRDAGLPIVPFVTMTAASPVSYDDAARAVGSSELFVKPANLGSSVGISKTRDAAEFEAACQLALRFDRKILIERCIAPVREIECAVLEHADGQIKASELGEIVPANSHGFYSYEAKYTDANGAALHVPAQVEPAVAQRIRKMATEVFGALCCESLARVDFFVRGDEIYVNEVNTLPGFTNISMYPKMWEAAGLPQPALMDELVAHALARHARLRELASQR</sequence>
<organism>
    <name type="scientific">Bradyrhizobium sp. (strain ORS 278)</name>
    <dbReference type="NCBI Taxonomy" id="114615"/>
    <lineage>
        <taxon>Bacteria</taxon>
        <taxon>Pseudomonadati</taxon>
        <taxon>Pseudomonadota</taxon>
        <taxon>Alphaproteobacteria</taxon>
        <taxon>Hyphomicrobiales</taxon>
        <taxon>Nitrobacteraceae</taxon>
        <taxon>Bradyrhizobium</taxon>
    </lineage>
</organism>
<gene>
    <name evidence="2" type="primary">ddl</name>
    <name type="ordered locus">BRADO2810</name>
</gene>
<proteinExistence type="inferred from homology"/>
<reference key="1">
    <citation type="journal article" date="2007" name="Science">
        <title>Legumes symbioses: absence of nod genes in photosynthetic bradyrhizobia.</title>
        <authorList>
            <person name="Giraud E."/>
            <person name="Moulin L."/>
            <person name="Vallenet D."/>
            <person name="Barbe V."/>
            <person name="Cytryn E."/>
            <person name="Avarre J.-C."/>
            <person name="Jaubert M."/>
            <person name="Simon D."/>
            <person name="Cartieaux F."/>
            <person name="Prin Y."/>
            <person name="Bena G."/>
            <person name="Hannibal L."/>
            <person name="Fardoux J."/>
            <person name="Kojadinovic M."/>
            <person name="Vuillet L."/>
            <person name="Lajus A."/>
            <person name="Cruveiller S."/>
            <person name="Rouy Z."/>
            <person name="Mangenot S."/>
            <person name="Segurens B."/>
            <person name="Dossat C."/>
            <person name="Franck W.L."/>
            <person name="Chang W.-S."/>
            <person name="Saunders E."/>
            <person name="Bruce D."/>
            <person name="Richardson P."/>
            <person name="Normand P."/>
            <person name="Dreyfus B."/>
            <person name="Pignol D."/>
            <person name="Stacey G."/>
            <person name="Emerich D."/>
            <person name="Vermeglio A."/>
            <person name="Medigue C."/>
            <person name="Sadowsky M."/>
        </authorList>
    </citation>
    <scope>NUCLEOTIDE SEQUENCE [LARGE SCALE GENOMIC DNA]</scope>
    <source>
        <strain>ORS 278</strain>
    </source>
</reference>
<name>DDL_BRASO</name>
<evidence type="ECO:0000250" key="1"/>
<evidence type="ECO:0000255" key="2">
    <source>
        <dbReference type="HAMAP-Rule" id="MF_00047"/>
    </source>
</evidence>
<protein>
    <recommendedName>
        <fullName evidence="2">D-alanine--D-alanine ligase</fullName>
        <ecNumber evidence="2">6.3.2.4</ecNumber>
    </recommendedName>
    <alternativeName>
        <fullName evidence="2">D-Ala-D-Ala ligase</fullName>
    </alternativeName>
    <alternativeName>
        <fullName evidence="2">D-alanylalanine synthetase</fullName>
    </alternativeName>
</protein>
<dbReference type="EC" id="6.3.2.4" evidence="2"/>
<dbReference type="EMBL" id="CU234118">
    <property type="protein sequence ID" value="CAL76620.1"/>
    <property type="molecule type" value="Genomic_DNA"/>
</dbReference>
<dbReference type="RefSeq" id="WP_011925823.1">
    <property type="nucleotide sequence ID" value="NC_009445.1"/>
</dbReference>
<dbReference type="SMR" id="A4YRU4"/>
<dbReference type="STRING" id="114615.BRADO2810"/>
<dbReference type="KEGG" id="bra:BRADO2810"/>
<dbReference type="eggNOG" id="COG1181">
    <property type="taxonomic scope" value="Bacteria"/>
</dbReference>
<dbReference type="HOGENOM" id="CLU_039268_0_0_5"/>
<dbReference type="OrthoDB" id="9813261at2"/>
<dbReference type="UniPathway" id="UPA00219"/>
<dbReference type="Proteomes" id="UP000001994">
    <property type="component" value="Chromosome"/>
</dbReference>
<dbReference type="GO" id="GO:0005829">
    <property type="term" value="C:cytosol"/>
    <property type="evidence" value="ECO:0007669"/>
    <property type="project" value="TreeGrafter"/>
</dbReference>
<dbReference type="GO" id="GO:0005524">
    <property type="term" value="F:ATP binding"/>
    <property type="evidence" value="ECO:0007669"/>
    <property type="project" value="UniProtKB-KW"/>
</dbReference>
<dbReference type="GO" id="GO:0008716">
    <property type="term" value="F:D-alanine-D-alanine ligase activity"/>
    <property type="evidence" value="ECO:0007669"/>
    <property type="project" value="UniProtKB-UniRule"/>
</dbReference>
<dbReference type="GO" id="GO:0046872">
    <property type="term" value="F:metal ion binding"/>
    <property type="evidence" value="ECO:0007669"/>
    <property type="project" value="UniProtKB-KW"/>
</dbReference>
<dbReference type="GO" id="GO:0071555">
    <property type="term" value="P:cell wall organization"/>
    <property type="evidence" value="ECO:0007669"/>
    <property type="project" value="UniProtKB-KW"/>
</dbReference>
<dbReference type="GO" id="GO:0009252">
    <property type="term" value="P:peptidoglycan biosynthetic process"/>
    <property type="evidence" value="ECO:0007669"/>
    <property type="project" value="UniProtKB-UniRule"/>
</dbReference>
<dbReference type="GO" id="GO:0008360">
    <property type="term" value="P:regulation of cell shape"/>
    <property type="evidence" value="ECO:0007669"/>
    <property type="project" value="UniProtKB-KW"/>
</dbReference>
<dbReference type="FunFam" id="3.30.470.20:FF:000008">
    <property type="entry name" value="D-alanine--D-alanine ligase"/>
    <property type="match status" value="1"/>
</dbReference>
<dbReference type="Gene3D" id="3.40.50.20">
    <property type="match status" value="1"/>
</dbReference>
<dbReference type="Gene3D" id="3.30.1490.20">
    <property type="entry name" value="ATP-grasp fold, A domain"/>
    <property type="match status" value="1"/>
</dbReference>
<dbReference type="Gene3D" id="3.30.470.20">
    <property type="entry name" value="ATP-grasp fold, B domain"/>
    <property type="match status" value="1"/>
</dbReference>
<dbReference type="HAMAP" id="MF_00047">
    <property type="entry name" value="Dala_Dala_lig"/>
    <property type="match status" value="1"/>
</dbReference>
<dbReference type="InterPro" id="IPR011761">
    <property type="entry name" value="ATP-grasp"/>
</dbReference>
<dbReference type="InterPro" id="IPR013815">
    <property type="entry name" value="ATP_grasp_subdomain_1"/>
</dbReference>
<dbReference type="InterPro" id="IPR000291">
    <property type="entry name" value="D-Ala_lig_Van_CS"/>
</dbReference>
<dbReference type="InterPro" id="IPR005905">
    <property type="entry name" value="D_ala_D_ala"/>
</dbReference>
<dbReference type="InterPro" id="IPR011095">
    <property type="entry name" value="Dala_Dala_lig_C"/>
</dbReference>
<dbReference type="InterPro" id="IPR011127">
    <property type="entry name" value="Dala_Dala_lig_N"/>
</dbReference>
<dbReference type="InterPro" id="IPR016185">
    <property type="entry name" value="PreATP-grasp_dom_sf"/>
</dbReference>
<dbReference type="NCBIfam" id="TIGR01205">
    <property type="entry name" value="D_ala_D_alaTIGR"/>
    <property type="match status" value="1"/>
</dbReference>
<dbReference type="NCBIfam" id="NF002528">
    <property type="entry name" value="PRK01966.1-4"/>
    <property type="match status" value="1"/>
</dbReference>
<dbReference type="PANTHER" id="PTHR23132">
    <property type="entry name" value="D-ALANINE--D-ALANINE LIGASE"/>
    <property type="match status" value="1"/>
</dbReference>
<dbReference type="PANTHER" id="PTHR23132:SF25">
    <property type="entry name" value="D-ALANINE--D-ALANINE LIGASE A"/>
    <property type="match status" value="1"/>
</dbReference>
<dbReference type="Pfam" id="PF07478">
    <property type="entry name" value="Dala_Dala_lig_C"/>
    <property type="match status" value="1"/>
</dbReference>
<dbReference type="Pfam" id="PF01820">
    <property type="entry name" value="Dala_Dala_lig_N"/>
    <property type="match status" value="1"/>
</dbReference>
<dbReference type="PIRSF" id="PIRSF039102">
    <property type="entry name" value="Ddl/VanB"/>
    <property type="match status" value="1"/>
</dbReference>
<dbReference type="SUPFAM" id="SSF56059">
    <property type="entry name" value="Glutathione synthetase ATP-binding domain-like"/>
    <property type="match status" value="1"/>
</dbReference>
<dbReference type="SUPFAM" id="SSF52440">
    <property type="entry name" value="PreATP-grasp domain"/>
    <property type="match status" value="1"/>
</dbReference>
<dbReference type="PROSITE" id="PS50975">
    <property type="entry name" value="ATP_GRASP"/>
    <property type="match status" value="1"/>
</dbReference>
<dbReference type="PROSITE" id="PS00843">
    <property type="entry name" value="DALA_DALA_LIGASE_1"/>
    <property type="match status" value="1"/>
</dbReference>
<dbReference type="PROSITE" id="PS00844">
    <property type="entry name" value="DALA_DALA_LIGASE_2"/>
    <property type="match status" value="1"/>
</dbReference>
<keyword id="KW-0067">ATP-binding</keyword>
<keyword id="KW-0133">Cell shape</keyword>
<keyword id="KW-0961">Cell wall biogenesis/degradation</keyword>
<keyword id="KW-0963">Cytoplasm</keyword>
<keyword id="KW-0436">Ligase</keyword>
<keyword id="KW-0460">Magnesium</keyword>
<keyword id="KW-0464">Manganese</keyword>
<keyword id="KW-0479">Metal-binding</keyword>
<keyword id="KW-0547">Nucleotide-binding</keyword>
<keyword id="KW-0573">Peptidoglycan synthesis</keyword>
<keyword id="KW-1185">Reference proteome</keyword>
<comment type="function">
    <text evidence="2">Cell wall formation.</text>
</comment>
<comment type="catalytic activity">
    <reaction evidence="2">
        <text>2 D-alanine + ATP = D-alanyl-D-alanine + ADP + phosphate + H(+)</text>
        <dbReference type="Rhea" id="RHEA:11224"/>
        <dbReference type="ChEBI" id="CHEBI:15378"/>
        <dbReference type="ChEBI" id="CHEBI:30616"/>
        <dbReference type="ChEBI" id="CHEBI:43474"/>
        <dbReference type="ChEBI" id="CHEBI:57416"/>
        <dbReference type="ChEBI" id="CHEBI:57822"/>
        <dbReference type="ChEBI" id="CHEBI:456216"/>
        <dbReference type="EC" id="6.3.2.4"/>
    </reaction>
</comment>
<comment type="cofactor">
    <cofactor evidence="1">
        <name>Mg(2+)</name>
        <dbReference type="ChEBI" id="CHEBI:18420"/>
    </cofactor>
    <cofactor evidence="1">
        <name>Mn(2+)</name>
        <dbReference type="ChEBI" id="CHEBI:29035"/>
    </cofactor>
    <text evidence="1">Binds 2 magnesium or manganese ions per subunit.</text>
</comment>
<comment type="pathway">
    <text evidence="2">Cell wall biogenesis; peptidoglycan biosynthesis.</text>
</comment>
<comment type="subcellular location">
    <subcellularLocation>
        <location evidence="2">Cytoplasm</location>
    </subcellularLocation>
</comment>
<comment type="similarity">
    <text evidence="2">Belongs to the D-alanine--D-alanine ligase family.</text>
</comment>